<proteinExistence type="inferred from homology"/>
<keyword id="KW-0010">Activator</keyword>
<keyword id="KW-0963">Cytoplasm</keyword>
<keyword id="KW-0539">Nucleus</keyword>
<keyword id="KW-1185">Reference proteome</keyword>
<keyword id="KW-0804">Transcription</keyword>
<keyword id="KW-0805">Transcription regulation</keyword>
<gene>
    <name type="primary">MSS11</name>
    <name type="ordered locus">KLLA0E01716g</name>
</gene>
<comment type="function">
    <text evidence="1">Transcription factor that regulates pseudohyphal differentiation, invasive growth, floculation, adhesion and starch metabolism in response to nutrient availability.</text>
</comment>
<comment type="subcellular location">
    <subcellularLocation>
        <location evidence="1">Cytoplasm</location>
    </subcellularLocation>
    <subcellularLocation>
        <location evidence="1">Nucleus</location>
    </subcellularLocation>
</comment>
<comment type="similarity">
    <text evidence="4">Belongs to the MSS11 family.</text>
</comment>
<organism>
    <name type="scientific">Kluyveromyces lactis (strain ATCC 8585 / CBS 2359 / DSM 70799 / NBRC 1267 / NRRL Y-1140 / WM37)</name>
    <name type="common">Yeast</name>
    <name type="synonym">Candida sphaerica</name>
    <dbReference type="NCBI Taxonomy" id="284590"/>
    <lineage>
        <taxon>Eukaryota</taxon>
        <taxon>Fungi</taxon>
        <taxon>Dikarya</taxon>
        <taxon>Ascomycota</taxon>
        <taxon>Saccharomycotina</taxon>
        <taxon>Saccharomycetes</taxon>
        <taxon>Saccharomycetales</taxon>
        <taxon>Saccharomycetaceae</taxon>
        <taxon>Kluyveromyces</taxon>
    </lineage>
</organism>
<name>MSS11_KLULA</name>
<sequence length="539" mass="60626">MAGPGARKSNASNTPQDKKMKGDSIQDQKNKQYNSGDVVEPFVSDAMAKNSKQLLYAHIYNYLVHNQHHDTAKKFLQEANVPLSKAVPQHSLNGDKLLNSKMLMNSPDTFLFEWWQSLWALNQYVETTPIENLTSLKPFNDRIVPILPQVPPQEMLSRVVRTGPIAPAMGFAGNIVPQQQQQQQQQQQQQLQQQQQQQQHFRTMTSPGSGNTPYATNANSFPAGVRVPQPQGSFQPVLGTTPNAGTNAGLGVNPYHAATLGSSKSTPKPQNTSVGSKNKQTKKSSATNKDSGANTKPRANGESKQFKGVNSSSKVKKPSPSGSQQVQANWTKLQQKQQQQQQQQQQQQQQQQQQQQQQQQHQQQQQHQQQQQHQQQQQHQQQQQQIRMQYQKMMTLMQHQQNQQNQQHHQLGNQNILPGQGDPSDNSSPSQQYLQQQRAYENMVKSQQQDQPMNKDHFAMSLQTQQPQSFDSYAMPATMGPQASSQPLDNNKKSEPLSKIDVTNNQDFNTFSGGSNNKLNFGQFDMSGLGNEFMGGRKQ</sequence>
<reference key="1">
    <citation type="journal article" date="2004" name="Nature">
        <title>Genome evolution in yeasts.</title>
        <authorList>
            <person name="Dujon B."/>
            <person name="Sherman D."/>
            <person name="Fischer G."/>
            <person name="Durrens P."/>
            <person name="Casaregola S."/>
            <person name="Lafontaine I."/>
            <person name="de Montigny J."/>
            <person name="Marck C."/>
            <person name="Neuveglise C."/>
            <person name="Talla E."/>
            <person name="Goffard N."/>
            <person name="Frangeul L."/>
            <person name="Aigle M."/>
            <person name="Anthouard V."/>
            <person name="Babour A."/>
            <person name="Barbe V."/>
            <person name="Barnay S."/>
            <person name="Blanchin S."/>
            <person name="Beckerich J.-M."/>
            <person name="Beyne E."/>
            <person name="Bleykasten C."/>
            <person name="Boisrame A."/>
            <person name="Boyer J."/>
            <person name="Cattolico L."/>
            <person name="Confanioleri F."/>
            <person name="de Daruvar A."/>
            <person name="Despons L."/>
            <person name="Fabre E."/>
            <person name="Fairhead C."/>
            <person name="Ferry-Dumazet H."/>
            <person name="Groppi A."/>
            <person name="Hantraye F."/>
            <person name="Hennequin C."/>
            <person name="Jauniaux N."/>
            <person name="Joyet P."/>
            <person name="Kachouri R."/>
            <person name="Kerrest A."/>
            <person name="Koszul R."/>
            <person name="Lemaire M."/>
            <person name="Lesur I."/>
            <person name="Ma L."/>
            <person name="Muller H."/>
            <person name="Nicaud J.-M."/>
            <person name="Nikolski M."/>
            <person name="Oztas S."/>
            <person name="Ozier-Kalogeropoulos O."/>
            <person name="Pellenz S."/>
            <person name="Potier S."/>
            <person name="Richard G.-F."/>
            <person name="Straub M.-L."/>
            <person name="Suleau A."/>
            <person name="Swennen D."/>
            <person name="Tekaia F."/>
            <person name="Wesolowski-Louvel M."/>
            <person name="Westhof E."/>
            <person name="Wirth B."/>
            <person name="Zeniou-Meyer M."/>
            <person name="Zivanovic Y."/>
            <person name="Bolotin-Fukuhara M."/>
            <person name="Thierry A."/>
            <person name="Bouchier C."/>
            <person name="Caudron B."/>
            <person name="Scarpelli C."/>
            <person name="Gaillardin C."/>
            <person name="Weissenbach J."/>
            <person name="Wincker P."/>
            <person name="Souciet J.-L."/>
        </authorList>
    </citation>
    <scope>NUCLEOTIDE SEQUENCE [LARGE SCALE GENOMIC DNA]</scope>
    <source>
        <strain>ATCC 8585 / CBS 2359 / DSM 70799 / NBRC 1267 / NRRL Y-1140 / WM37</strain>
    </source>
</reference>
<protein>
    <recommendedName>
        <fullName>Transcription activator MSS11</fullName>
    </recommendedName>
</protein>
<evidence type="ECO:0000250" key="1"/>
<evidence type="ECO:0000255" key="2">
    <source>
        <dbReference type="PROSITE-ProRule" id="PRU00126"/>
    </source>
</evidence>
<evidence type="ECO:0000256" key="3">
    <source>
        <dbReference type="SAM" id="MobiDB-lite"/>
    </source>
</evidence>
<evidence type="ECO:0000305" key="4"/>
<accession>Q6CPW4</accession>
<feature type="chain" id="PRO_0000333385" description="Transcription activator MSS11">
    <location>
        <begin position="1"/>
        <end position="539"/>
    </location>
</feature>
<feature type="domain" description="LisH" evidence="2">
    <location>
        <begin position="51"/>
        <end position="83"/>
    </location>
</feature>
<feature type="region of interest" description="Disordered" evidence="3">
    <location>
        <begin position="1"/>
        <end position="33"/>
    </location>
</feature>
<feature type="region of interest" description="Disordered" evidence="3">
    <location>
        <begin position="177"/>
        <end position="331"/>
    </location>
</feature>
<feature type="region of interest" description="Disordered" evidence="3">
    <location>
        <begin position="396"/>
        <end position="452"/>
    </location>
</feature>
<feature type="region of interest" description="Disordered" evidence="3">
    <location>
        <begin position="477"/>
        <end position="517"/>
    </location>
</feature>
<feature type="compositionally biased region" description="Basic and acidic residues" evidence="3">
    <location>
        <begin position="16"/>
        <end position="30"/>
    </location>
</feature>
<feature type="compositionally biased region" description="Low complexity" evidence="3">
    <location>
        <begin position="178"/>
        <end position="199"/>
    </location>
</feature>
<feature type="compositionally biased region" description="Polar residues" evidence="3">
    <location>
        <begin position="200"/>
        <end position="220"/>
    </location>
</feature>
<feature type="compositionally biased region" description="Polar residues" evidence="3">
    <location>
        <begin position="230"/>
        <end position="246"/>
    </location>
</feature>
<feature type="compositionally biased region" description="Polar residues" evidence="3">
    <location>
        <begin position="260"/>
        <end position="294"/>
    </location>
</feature>
<feature type="compositionally biased region" description="Low complexity" evidence="3">
    <location>
        <begin position="307"/>
        <end position="323"/>
    </location>
</feature>
<feature type="compositionally biased region" description="Low complexity" evidence="3">
    <location>
        <begin position="398"/>
        <end position="415"/>
    </location>
</feature>
<feature type="compositionally biased region" description="Polar residues" evidence="3">
    <location>
        <begin position="423"/>
        <end position="452"/>
    </location>
</feature>
<feature type="compositionally biased region" description="Polar residues" evidence="3">
    <location>
        <begin position="501"/>
        <end position="517"/>
    </location>
</feature>
<dbReference type="EMBL" id="CR382125">
    <property type="protein sequence ID" value="CAG99112.1"/>
    <property type="molecule type" value="Genomic_DNA"/>
</dbReference>
<dbReference type="RefSeq" id="XP_454025.1">
    <property type="nucleotide sequence ID" value="XM_454025.1"/>
</dbReference>
<dbReference type="SMR" id="Q6CPW4"/>
<dbReference type="STRING" id="284590.Q6CPW4"/>
<dbReference type="PaxDb" id="284590-Q6CPW4"/>
<dbReference type="KEGG" id="kla:KLLA0_E01717g"/>
<dbReference type="eggNOG" id="ENOG502S549">
    <property type="taxonomic scope" value="Eukaryota"/>
</dbReference>
<dbReference type="HOGENOM" id="CLU_505333_0_0_1"/>
<dbReference type="InParanoid" id="Q6CPW4"/>
<dbReference type="OMA" id="EWWQSLW"/>
<dbReference type="Proteomes" id="UP000000598">
    <property type="component" value="Chromosome E"/>
</dbReference>
<dbReference type="GO" id="GO:0005737">
    <property type="term" value="C:cytoplasm"/>
    <property type="evidence" value="ECO:0007669"/>
    <property type="project" value="UniProtKB-SubCell"/>
</dbReference>
<dbReference type="GO" id="GO:0005634">
    <property type="term" value="C:nucleus"/>
    <property type="evidence" value="ECO:0007669"/>
    <property type="project" value="UniProtKB-SubCell"/>
</dbReference>
<dbReference type="GO" id="GO:0009889">
    <property type="term" value="P:regulation of biosynthetic process"/>
    <property type="evidence" value="ECO:0007669"/>
    <property type="project" value="UniProtKB-ARBA"/>
</dbReference>
<dbReference type="InterPro" id="IPR006594">
    <property type="entry name" value="LisH"/>
</dbReference>
<dbReference type="PANTHER" id="PTHR45093:SF2">
    <property type="entry name" value="LISH DOMAIN-CONTAINING PROTEIN"/>
    <property type="match status" value="1"/>
</dbReference>
<dbReference type="PANTHER" id="PTHR45093">
    <property type="entry name" value="TRANSCRIPTION ACTIVATOR MSS11"/>
    <property type="match status" value="1"/>
</dbReference>
<dbReference type="Pfam" id="PF08513">
    <property type="entry name" value="LisH"/>
    <property type="match status" value="1"/>
</dbReference>
<dbReference type="SMART" id="SM00667">
    <property type="entry name" value="LisH"/>
    <property type="match status" value="1"/>
</dbReference>
<dbReference type="PROSITE" id="PS50896">
    <property type="entry name" value="LISH"/>
    <property type="match status" value="1"/>
</dbReference>